<evidence type="ECO:0000255" key="1"/>
<evidence type="ECO:0000305" key="2"/>
<dbReference type="EMBL" id="BX640451">
    <property type="protein sequence ID" value="CAE35259.1"/>
    <property type="molecule type" value="Genomic_DNA"/>
</dbReference>
<dbReference type="RefSeq" id="WP_003815858.1">
    <property type="nucleotide sequence ID" value="NC_002927.3"/>
</dbReference>
<dbReference type="SMR" id="Q7WDU2"/>
<dbReference type="GeneID" id="56476605"/>
<dbReference type="KEGG" id="bbr:BB4896"/>
<dbReference type="eggNOG" id="COG3702">
    <property type="taxonomic scope" value="Bacteria"/>
</dbReference>
<dbReference type="HOGENOM" id="CLU_158477_0_0_4"/>
<dbReference type="Proteomes" id="UP000001027">
    <property type="component" value="Chromosome"/>
</dbReference>
<dbReference type="GO" id="GO:0005886">
    <property type="term" value="C:plasma membrane"/>
    <property type="evidence" value="ECO:0007669"/>
    <property type="project" value="UniProtKB-SubCell"/>
</dbReference>
<dbReference type="InterPro" id="IPR007792">
    <property type="entry name" value="T4SS_VirB3/TrbD/AvhB"/>
</dbReference>
<dbReference type="Pfam" id="PF05101">
    <property type="entry name" value="VirB3"/>
    <property type="match status" value="1"/>
</dbReference>
<feature type="chain" id="PRO_0000287407" description="Type IV secretion system protein PtlB homolog">
    <location>
        <begin position="1"/>
        <end position="104"/>
    </location>
</feature>
<feature type="transmembrane region" description="Helical" evidence="1">
    <location>
        <begin position="30"/>
        <end position="50"/>
    </location>
</feature>
<organism>
    <name type="scientific">Bordetella bronchiseptica (strain ATCC BAA-588 / NCTC 13252 / RB50)</name>
    <name type="common">Alcaligenes bronchisepticus</name>
    <dbReference type="NCBI Taxonomy" id="257310"/>
    <lineage>
        <taxon>Bacteria</taxon>
        <taxon>Pseudomonadati</taxon>
        <taxon>Pseudomonadota</taxon>
        <taxon>Betaproteobacteria</taxon>
        <taxon>Burkholderiales</taxon>
        <taxon>Alcaligenaceae</taxon>
        <taxon>Bordetella</taxon>
    </lineage>
</organism>
<reference key="1">
    <citation type="journal article" date="2003" name="Nat. Genet.">
        <title>Comparative analysis of the genome sequences of Bordetella pertussis, Bordetella parapertussis and Bordetella bronchiseptica.</title>
        <authorList>
            <person name="Parkhill J."/>
            <person name="Sebaihia M."/>
            <person name="Preston A."/>
            <person name="Murphy L.D."/>
            <person name="Thomson N.R."/>
            <person name="Harris D.E."/>
            <person name="Holden M.T.G."/>
            <person name="Churcher C.M."/>
            <person name="Bentley S.D."/>
            <person name="Mungall K.L."/>
            <person name="Cerdeno-Tarraga A.-M."/>
            <person name="Temple L."/>
            <person name="James K.D."/>
            <person name="Harris B."/>
            <person name="Quail M.A."/>
            <person name="Achtman M."/>
            <person name="Atkin R."/>
            <person name="Baker S."/>
            <person name="Basham D."/>
            <person name="Bason N."/>
            <person name="Cherevach I."/>
            <person name="Chillingworth T."/>
            <person name="Collins M."/>
            <person name="Cronin A."/>
            <person name="Davis P."/>
            <person name="Doggett J."/>
            <person name="Feltwell T."/>
            <person name="Goble A."/>
            <person name="Hamlin N."/>
            <person name="Hauser H."/>
            <person name="Holroyd S."/>
            <person name="Jagels K."/>
            <person name="Leather S."/>
            <person name="Moule S."/>
            <person name="Norberczak H."/>
            <person name="O'Neil S."/>
            <person name="Ormond D."/>
            <person name="Price C."/>
            <person name="Rabbinowitsch E."/>
            <person name="Rutter S."/>
            <person name="Sanders M."/>
            <person name="Saunders D."/>
            <person name="Seeger K."/>
            <person name="Sharp S."/>
            <person name="Simmonds M."/>
            <person name="Skelton J."/>
            <person name="Squares R."/>
            <person name="Squares S."/>
            <person name="Stevens K."/>
            <person name="Unwin L."/>
            <person name="Whitehead S."/>
            <person name="Barrell B.G."/>
            <person name="Maskell D.J."/>
        </authorList>
    </citation>
    <scope>NUCLEOTIDE SEQUENCE [LARGE SCALE GENOMIC DNA]</scope>
    <source>
        <strain>ATCC BAA-588 / NCTC 13252 / RB50</strain>
    </source>
</reference>
<reference key="2">
    <citation type="journal article" date="1987" name="J. Bacteriol.">
        <title>Bordetella parapertussis and Bordetella bronchiseptica contain transcriptionally silent pertussis toxin genes.</title>
        <authorList>
            <person name="Arico B."/>
            <person name="Rappuoli R."/>
        </authorList>
    </citation>
    <scope>TRANSCRIPTIONAL SILENCING</scope>
    <source>
        <strain>ATCC 4617 / NCIB 9935 / NCTC 8344 / NRRL B-140</strain>
    </source>
</reference>
<reference key="3">
    <citation type="journal article" date="1996" name="Infect. Immun.">
        <title>Analysis of proteins encoded by the ptx and ptl genes of Bordetella bronchiseptica and Bordetella parapertussis.</title>
        <authorList>
            <person name="Hausman S.Z."/>
            <person name="Cherry J.D."/>
            <person name="Heininger U."/>
            <person name="Wirsing von Koenig C.H."/>
            <person name="Burns D.L."/>
        </authorList>
    </citation>
    <scope>POSSIBLE EXPRESSION OF PTL AND PTX PROTEINS UNDER CONDITIONS DIFFERENT FROM B.PERTUSSIS EXPRESSION CONDITIONS</scope>
    <source>
        <strain>ATCC 31437 / Bb55</strain>
    </source>
</reference>
<keyword id="KW-1003">Cell membrane</keyword>
<keyword id="KW-0472">Membrane</keyword>
<keyword id="KW-0812">Transmembrane</keyword>
<keyword id="KW-1133">Transmembrane helix</keyword>
<proteinExistence type="inferred from homology"/>
<sequence length="104" mass="12284">MRDPLFKGCTRPAMLMGVPATPLAVCSGTIALLGIWFSIAFLALFPVALLAMRIMIRRDDQQFRLIWLYLRMRWLSRDRTHAFWQSTVYAPLRYAERRQRLRKP</sequence>
<name>PTLB_BORBR</name>
<comment type="subcellular location">
    <subcellularLocation>
        <location evidence="2">Cell membrane</location>
        <topology evidence="2">Single-pass membrane protein</topology>
    </subcellularLocation>
</comment>
<comment type="similarity">
    <text evidence="2">Belongs to the virB3 family.</text>
</comment>
<comment type="caution">
    <text evidence="2">B.parapertussis and B.bronchiseptica seem not to produce the pertussis toxin (S1, S2, S4, S5 and S3) and ptl proteins (PtlA, PtlB, PtlC, PtlD, PtlE, PtlF, PtlG, PtlH and PtlI) in vivo due to changes in the promoter region of the ptx-ptl operon. However, it is possible that their promoter is active under certain, as-yet-undefined conditions and that B.parapertussis and B.bronchiseptica are therefore capable of producing these proteins.</text>
</comment>
<gene>
    <name type="primary">ptlB</name>
    <name type="ordered locus">BB4896</name>
</gene>
<protein>
    <recommendedName>
        <fullName>Type IV secretion system protein PtlB homolog</fullName>
    </recommendedName>
</protein>
<accession>Q7WDU2</accession>